<reference key="1">
    <citation type="journal article" date="1999" name="J. Virol.">
        <title>Comparison of the complete DNA sequences of human herpesvirus 6 variants A and B.</title>
        <authorList>
            <person name="Isegawa Y."/>
            <person name="Mukai T."/>
            <person name="Nakano K."/>
            <person name="Kagawa M."/>
            <person name="Chen J."/>
            <person name="Mori Y."/>
            <person name="Sunagawa T."/>
            <person name="Kawanishi K."/>
            <person name="Sashihara J."/>
            <person name="Hata A."/>
            <person name="Zou P."/>
            <person name="Kosuge H."/>
            <person name="Yamanishi K."/>
        </authorList>
    </citation>
    <scope>NUCLEOTIDE SEQUENCE [LARGE SCALE GENOMIC DNA]</scope>
    <source>
        <strain>HST</strain>
    </source>
</reference>
<sequence length="299" mass="34127">MNSKSSARAAIVDTVEAVKKRKYISIEAGTLNNVVEKERKFLKQFLSGRENLRIAARVFTPCELLAPELENLGMLMYRFETDVDNPKILFVGLFFLCSNAFNVSACVRTALTTMYTNSMVDNVLSMINTCKYLEDKVSLFGVTSLVSCGSSCLLSCVMQGNVYDANKENIHGLTVLKEIFLEPDWEPRQHSTQYVYVVHVYKEVLSKLQYGIYVVLTSFQNEDLVVDILRQYFEKERFLFLNYLINSNTTLSYFGSVQRIGRCATEDIKSGFLQYRGITLPVIKLENIFVDLSEKKVFV</sequence>
<dbReference type="EMBL" id="AB021506">
    <property type="protein sequence ID" value="BAA78250.1"/>
    <property type="molecule type" value="Genomic_DNA"/>
</dbReference>
<dbReference type="RefSeq" id="NP_050210.1">
    <property type="nucleotide sequence ID" value="NC_000898.1"/>
</dbReference>
<dbReference type="SMR" id="P0DTP4"/>
<dbReference type="GeneID" id="1497031"/>
<dbReference type="KEGG" id="vg:1497031"/>
<dbReference type="Proteomes" id="UP000142685">
    <property type="component" value="Segment"/>
</dbReference>
<dbReference type="GO" id="GO:0042025">
    <property type="term" value="C:host cell nucleus"/>
    <property type="evidence" value="ECO:0007669"/>
    <property type="project" value="UniProtKB-SubCell"/>
</dbReference>
<dbReference type="GO" id="GO:0019028">
    <property type="term" value="C:viral capsid"/>
    <property type="evidence" value="ECO:0007669"/>
    <property type="project" value="UniProtKB-KW"/>
</dbReference>
<dbReference type="GO" id="GO:0003677">
    <property type="term" value="F:DNA binding"/>
    <property type="evidence" value="ECO:0007669"/>
    <property type="project" value="InterPro"/>
</dbReference>
<dbReference type="GO" id="GO:0019069">
    <property type="term" value="P:viral capsid assembly"/>
    <property type="evidence" value="ECO:0007669"/>
    <property type="project" value="InterPro"/>
</dbReference>
<dbReference type="HAMAP" id="MF_04018">
    <property type="entry name" value="HSV_TRX1"/>
    <property type="match status" value="1"/>
</dbReference>
<dbReference type="InterPro" id="IPR004999">
    <property type="entry name" value="Herpes_1"/>
</dbReference>
<dbReference type="Pfam" id="PF03327">
    <property type="entry name" value="Herpes_VP19C"/>
    <property type="match status" value="1"/>
</dbReference>
<organismHost>
    <name type="scientific">Homo sapiens</name>
    <name type="common">Human</name>
    <dbReference type="NCBI Taxonomy" id="9606"/>
</organismHost>
<gene>
    <name evidence="1" type="primary">TRX1</name>
    <name type="ordered locus">U29</name>
</gene>
<organism>
    <name type="scientific">Human herpesvirus 6B</name>
    <name type="common">HHV-6 variant B</name>
    <name type="synonym">Human B lymphotropic virus</name>
    <dbReference type="NCBI Taxonomy" id="32604"/>
    <lineage>
        <taxon>Viruses</taxon>
        <taxon>Duplodnaviria</taxon>
        <taxon>Heunggongvirae</taxon>
        <taxon>Peploviricota</taxon>
        <taxon>Herviviricetes</taxon>
        <taxon>Herpesvirales</taxon>
        <taxon>Orthoherpesviridae</taxon>
        <taxon>Betaherpesvirinae</taxon>
        <taxon>Roseolovirus</taxon>
        <taxon>Roseolovirus humanbeta6b</taxon>
    </lineage>
</organism>
<evidence type="ECO:0000255" key="1">
    <source>
        <dbReference type="HAMAP-Rule" id="MF_04018"/>
    </source>
</evidence>
<feature type="chain" id="PRO_0000461149" description="Triplex capsid protein 1">
    <location>
        <begin position="1"/>
        <end position="299"/>
    </location>
</feature>
<proteinExistence type="inferred from homology"/>
<name>TRX1_HHV6H</name>
<accession>P0DTP4</accession>
<accession>Q77PV0</accession>
<accession>Q9WT35</accession>
<comment type="function">
    <text evidence="1">Structural component of the T=16 icosahedral capsid. The capsid is composed of pentamers and hexamers of major capsid protein/MCP, which are linked together by heterotrimers called triplexes. These triplexes are formed by a single molecule of triplex protein 1/TRX1 and two copies of triplex protein 2/TRX2. Additionally, TRX1 is required for efficient transport of TRX2 to the nucleus, which is the site of capsid assembly.</text>
</comment>
<comment type="subunit">
    <text evidence="1">Interacts with TRX2, MCP and capsid vertex component 2/CVC2.</text>
</comment>
<comment type="subcellular location">
    <subcellularLocation>
        <location evidence="1">Virion</location>
    </subcellularLocation>
    <subcellularLocation>
        <location evidence="1">Host nucleus</location>
    </subcellularLocation>
</comment>
<comment type="similarity">
    <text evidence="1">Belongs to the herpesviridae TRX1 protein family.</text>
</comment>
<protein>
    <recommendedName>
        <fullName evidence="1">Triplex capsid protein 1</fullName>
    </recommendedName>
</protein>
<keyword id="KW-0167">Capsid protein</keyword>
<keyword id="KW-1048">Host nucleus</keyword>
<keyword id="KW-0946">Virion</keyword>